<keyword id="KW-0456">Lyase</keyword>
<keyword id="KW-0460">Magnesium</keyword>
<keyword id="KW-0479">Metal-binding</keyword>
<accession>B1IXU2</accession>
<evidence type="ECO:0000255" key="1">
    <source>
        <dbReference type="HAMAP-Rule" id="MF_01290"/>
    </source>
</evidence>
<protein>
    <recommendedName>
        <fullName evidence="1">2-keto-3-deoxy-L-rhamnonate aldolase</fullName>
        <shortName evidence="1">KDR aldolase</shortName>
        <ecNumber evidence="1">4.1.2.53</ecNumber>
    </recommendedName>
    <alternativeName>
        <fullName evidence="1">2-dehydro-3-deoxyrhamnonate aldolase</fullName>
    </alternativeName>
</protein>
<comment type="function">
    <text evidence="1">Catalyzes the reversible retro-aldol cleavage of 2-keto-3-deoxy-L-rhamnonate (KDR) to pyruvate and lactaldehyde.</text>
</comment>
<comment type="catalytic activity">
    <reaction evidence="1">
        <text>2-dehydro-3-deoxy-L-rhamnonate = (S)-lactaldehyde + pyruvate</text>
        <dbReference type="Rhea" id="RHEA:25784"/>
        <dbReference type="ChEBI" id="CHEBI:15361"/>
        <dbReference type="ChEBI" id="CHEBI:18041"/>
        <dbReference type="ChEBI" id="CHEBI:58371"/>
        <dbReference type="EC" id="4.1.2.53"/>
    </reaction>
</comment>
<comment type="cofactor">
    <cofactor evidence="1">
        <name>Mg(2+)</name>
        <dbReference type="ChEBI" id="CHEBI:18420"/>
    </cofactor>
    <text evidence="1">Binds 1 Mg(2+) ion per subunit.</text>
</comment>
<comment type="subunit">
    <text evidence="1">Homohexamer.</text>
</comment>
<comment type="similarity">
    <text evidence="1">Belongs to the HpcH/HpaI aldolase family. KDR aldolase subfamily.</text>
</comment>
<proteinExistence type="inferred from homology"/>
<sequence>MNALLSNPFKERLRKGEVQIGLWLSSTTAYMAEIAATSGYDWLLIDGEHAPNTIQDLYHQLQAVAPYASQPVIRPVEGSKPLIKQVLDIGAQTLLIPMVDTAEQARQVVSATRYPPYGERGVGASVARAARWGRIENYMAQVNDSLCLLVQVESKTALDNLDEILDVEGIDGVFIGPADLSASLGYPDNAGHPEVQRIIETSIRRIRAAGKAAGFLAVAPDMAQQCLAWGANFVAVGVDTMLYSDALDQRLAMFKSGKNGPRIKGSY</sequence>
<feature type="chain" id="PRO_0000353169" description="2-keto-3-deoxy-L-rhamnonate aldolase">
    <location>
        <begin position="1"/>
        <end position="267"/>
    </location>
</feature>
<feature type="active site" description="Proton acceptor" evidence="1">
    <location>
        <position position="49"/>
    </location>
</feature>
<feature type="binding site" evidence="1">
    <location>
        <position position="151"/>
    </location>
    <ligand>
        <name>substrate</name>
    </ligand>
</feature>
<feature type="binding site" evidence="1">
    <location>
        <position position="153"/>
    </location>
    <ligand>
        <name>Mg(2+)</name>
        <dbReference type="ChEBI" id="CHEBI:18420"/>
    </ligand>
</feature>
<feature type="binding site" evidence="1">
    <location>
        <position position="178"/>
    </location>
    <ligand>
        <name>substrate</name>
    </ligand>
</feature>
<feature type="binding site" evidence="1">
    <location>
        <position position="179"/>
    </location>
    <ligand>
        <name>Mg(2+)</name>
        <dbReference type="ChEBI" id="CHEBI:18420"/>
    </ligand>
</feature>
<feature type="binding site" evidence="1">
    <location>
        <position position="179"/>
    </location>
    <ligand>
        <name>substrate</name>
    </ligand>
</feature>
<feature type="site" description="Transition state stabilizer" evidence="1">
    <location>
        <position position="74"/>
    </location>
</feature>
<feature type="site" description="Increases basicity of active site His" evidence="1">
    <location>
        <position position="88"/>
    </location>
</feature>
<dbReference type="EC" id="4.1.2.53" evidence="1"/>
<dbReference type="EMBL" id="CP000946">
    <property type="protein sequence ID" value="ACA77068.1"/>
    <property type="molecule type" value="Genomic_DNA"/>
</dbReference>
<dbReference type="SMR" id="B1IXU2"/>
<dbReference type="KEGG" id="ecl:EcolC_1404"/>
<dbReference type="HOGENOM" id="CLU_059964_1_0_6"/>
<dbReference type="GO" id="GO:0005737">
    <property type="term" value="C:cytoplasm"/>
    <property type="evidence" value="ECO:0007669"/>
    <property type="project" value="TreeGrafter"/>
</dbReference>
<dbReference type="GO" id="GO:0106099">
    <property type="term" value="F:2-keto-3-deoxy-L-rhamnonate aldolase activity"/>
    <property type="evidence" value="ECO:0007669"/>
    <property type="project" value="UniProtKB-EC"/>
</dbReference>
<dbReference type="GO" id="GO:0000287">
    <property type="term" value="F:magnesium ion binding"/>
    <property type="evidence" value="ECO:0007669"/>
    <property type="project" value="UniProtKB-UniRule"/>
</dbReference>
<dbReference type="FunFam" id="3.20.20.60:FF:000004">
    <property type="entry name" value="5-keto-4-deoxy-D-glucarate aldolase"/>
    <property type="match status" value="1"/>
</dbReference>
<dbReference type="Gene3D" id="3.20.20.60">
    <property type="entry name" value="Phosphoenolpyruvate-binding domains"/>
    <property type="match status" value="1"/>
</dbReference>
<dbReference type="HAMAP" id="MF_01290">
    <property type="entry name" value="KDR_aldolase"/>
    <property type="match status" value="1"/>
</dbReference>
<dbReference type="InterPro" id="IPR005000">
    <property type="entry name" value="Aldolase/citrate-lyase_domain"/>
</dbReference>
<dbReference type="InterPro" id="IPR050251">
    <property type="entry name" value="HpcH-HpaI_aldolase"/>
</dbReference>
<dbReference type="InterPro" id="IPR023593">
    <property type="entry name" value="KDR_aldolase"/>
</dbReference>
<dbReference type="InterPro" id="IPR015813">
    <property type="entry name" value="Pyrv/PenolPyrv_kinase-like_dom"/>
</dbReference>
<dbReference type="InterPro" id="IPR040442">
    <property type="entry name" value="Pyrv_kinase-like_dom_sf"/>
</dbReference>
<dbReference type="NCBIfam" id="NF007521">
    <property type="entry name" value="PRK10128.1"/>
    <property type="match status" value="1"/>
</dbReference>
<dbReference type="PANTHER" id="PTHR30502">
    <property type="entry name" value="2-KETO-3-DEOXY-L-RHAMNONATE ALDOLASE"/>
    <property type="match status" value="1"/>
</dbReference>
<dbReference type="PANTHER" id="PTHR30502:SF5">
    <property type="entry name" value="2-KETO-3-DEOXY-L-RHAMNONATE ALDOLASE"/>
    <property type="match status" value="1"/>
</dbReference>
<dbReference type="Pfam" id="PF03328">
    <property type="entry name" value="HpcH_HpaI"/>
    <property type="match status" value="1"/>
</dbReference>
<dbReference type="SUPFAM" id="SSF51621">
    <property type="entry name" value="Phosphoenolpyruvate/pyruvate domain"/>
    <property type="match status" value="1"/>
</dbReference>
<name>RHMA_ECOLC</name>
<gene>
    <name evidence="1" type="primary">rhmA</name>
    <name type="ordered locus">EcolC_1404</name>
</gene>
<organism>
    <name type="scientific">Escherichia coli (strain ATCC 8739 / DSM 1576 / NBRC 3972 / NCIMB 8545 / WDCM 00012 / Crooks)</name>
    <dbReference type="NCBI Taxonomy" id="481805"/>
    <lineage>
        <taxon>Bacteria</taxon>
        <taxon>Pseudomonadati</taxon>
        <taxon>Pseudomonadota</taxon>
        <taxon>Gammaproteobacteria</taxon>
        <taxon>Enterobacterales</taxon>
        <taxon>Enterobacteriaceae</taxon>
        <taxon>Escherichia</taxon>
    </lineage>
</organism>
<reference key="1">
    <citation type="submission" date="2008-02" db="EMBL/GenBank/DDBJ databases">
        <title>Complete sequence of Escherichia coli C str. ATCC 8739.</title>
        <authorList>
            <person name="Copeland A."/>
            <person name="Lucas S."/>
            <person name="Lapidus A."/>
            <person name="Glavina del Rio T."/>
            <person name="Dalin E."/>
            <person name="Tice H."/>
            <person name="Bruce D."/>
            <person name="Goodwin L."/>
            <person name="Pitluck S."/>
            <person name="Kiss H."/>
            <person name="Brettin T."/>
            <person name="Detter J.C."/>
            <person name="Han C."/>
            <person name="Kuske C.R."/>
            <person name="Schmutz J."/>
            <person name="Larimer F."/>
            <person name="Land M."/>
            <person name="Hauser L."/>
            <person name="Kyrpides N."/>
            <person name="Mikhailova N."/>
            <person name="Ingram L."/>
            <person name="Richardson P."/>
        </authorList>
    </citation>
    <scope>NUCLEOTIDE SEQUENCE [LARGE SCALE GENOMIC DNA]</scope>
    <source>
        <strain>ATCC 8739 / DSM 1576 / NBRC 3972 / NCIMB 8545 / WDCM 00012 / Crooks</strain>
    </source>
</reference>